<dbReference type="EMBL" id="L77117">
    <property type="protein sequence ID" value="AAB98860.1"/>
    <property type="molecule type" value="Genomic_DNA"/>
</dbReference>
<dbReference type="PIR" id="H64406">
    <property type="entry name" value="H64406"/>
</dbReference>
<dbReference type="SMR" id="Q58266"/>
<dbReference type="FunCoup" id="Q58266">
    <property type="interactions" value="4"/>
</dbReference>
<dbReference type="STRING" id="243232.MJ_0856"/>
<dbReference type="PaxDb" id="243232-MJ_0856"/>
<dbReference type="EnsemblBacteria" id="AAB98860">
    <property type="protein sequence ID" value="AAB98860"/>
    <property type="gene ID" value="MJ_0856"/>
</dbReference>
<dbReference type="KEGG" id="mja:MJ_0856"/>
<dbReference type="eggNOG" id="arCOG04906">
    <property type="taxonomic scope" value="Archaea"/>
</dbReference>
<dbReference type="HOGENOM" id="CLU_1529229_0_0_2"/>
<dbReference type="InParanoid" id="Q58266"/>
<dbReference type="Proteomes" id="UP000000805">
    <property type="component" value="Chromosome"/>
</dbReference>
<dbReference type="InterPro" id="IPR056730">
    <property type="entry name" value="DUF2096_C"/>
</dbReference>
<dbReference type="InterPro" id="IPR056731">
    <property type="entry name" value="DUF2096_N"/>
</dbReference>
<dbReference type="InterPro" id="IPR017098">
    <property type="entry name" value="UCP037052"/>
</dbReference>
<dbReference type="Pfam" id="PF23100">
    <property type="entry name" value="DUF2096_N"/>
    <property type="match status" value="1"/>
</dbReference>
<dbReference type="Pfam" id="PF09869">
    <property type="entry name" value="KH_DUF2096_C"/>
    <property type="match status" value="1"/>
</dbReference>
<dbReference type="PIRSF" id="PIRSF037052">
    <property type="entry name" value="UCP037052"/>
    <property type="match status" value="1"/>
</dbReference>
<reference key="1">
    <citation type="journal article" date="1996" name="Science">
        <title>Complete genome sequence of the methanogenic archaeon, Methanococcus jannaschii.</title>
        <authorList>
            <person name="Bult C.J."/>
            <person name="White O."/>
            <person name="Olsen G.J."/>
            <person name="Zhou L."/>
            <person name="Fleischmann R.D."/>
            <person name="Sutton G.G."/>
            <person name="Blake J.A."/>
            <person name="FitzGerald L.M."/>
            <person name="Clayton R.A."/>
            <person name="Gocayne J.D."/>
            <person name="Kerlavage A.R."/>
            <person name="Dougherty B.A."/>
            <person name="Tomb J.-F."/>
            <person name="Adams M.D."/>
            <person name="Reich C.I."/>
            <person name="Overbeek R."/>
            <person name="Kirkness E.F."/>
            <person name="Weinstock K.G."/>
            <person name="Merrick J.M."/>
            <person name="Glodek A."/>
            <person name="Scott J.L."/>
            <person name="Geoghagen N.S.M."/>
            <person name="Weidman J.F."/>
            <person name="Fuhrmann J.L."/>
            <person name="Nguyen D."/>
            <person name="Utterback T.R."/>
            <person name="Kelley J.M."/>
            <person name="Peterson J.D."/>
            <person name="Sadow P.W."/>
            <person name="Hanna M.C."/>
            <person name="Cotton M.D."/>
            <person name="Roberts K.M."/>
            <person name="Hurst M.A."/>
            <person name="Kaine B.P."/>
            <person name="Borodovsky M."/>
            <person name="Klenk H.-P."/>
            <person name="Fraser C.M."/>
            <person name="Smith H.O."/>
            <person name="Woese C.R."/>
            <person name="Venter J.C."/>
        </authorList>
    </citation>
    <scope>NUCLEOTIDE SEQUENCE [LARGE SCALE GENOMIC DNA]</scope>
    <source>
        <strain>ATCC 43067 / DSM 2661 / JAL-1 / JCM 10045 / NBRC 100440</strain>
    </source>
</reference>
<name>Y856_METJA</name>
<protein>
    <recommendedName>
        <fullName>Uncharacterized protein MJ0856</fullName>
    </recommendedName>
</protein>
<gene>
    <name type="ordered locus">MJ0856</name>
</gene>
<accession>Q58266</accession>
<sequence>MEMGNGMKDARNLDKQWVVLSELSAELVNRGIKVPEIVFEKLRLANALLSYYILDPHASINILANVERELNYVQSQLFSLCDTELTEKYLDRMIKAIRGEINAKFPVSKSNYNREVKKRGKVEAIRVKLQKEMQIERLSDLGEWHGVIFEYSDEKDKVIIEGNIDRVKRALKDFAFMWKED</sequence>
<proteinExistence type="predicted"/>
<feature type="chain" id="PRO_0000107080" description="Uncharacterized protein MJ0856">
    <location>
        <begin position="1"/>
        <end position="181"/>
    </location>
</feature>
<organism>
    <name type="scientific">Methanocaldococcus jannaschii (strain ATCC 43067 / DSM 2661 / JAL-1 / JCM 10045 / NBRC 100440)</name>
    <name type="common">Methanococcus jannaschii</name>
    <dbReference type="NCBI Taxonomy" id="243232"/>
    <lineage>
        <taxon>Archaea</taxon>
        <taxon>Methanobacteriati</taxon>
        <taxon>Methanobacteriota</taxon>
        <taxon>Methanomada group</taxon>
        <taxon>Methanococci</taxon>
        <taxon>Methanococcales</taxon>
        <taxon>Methanocaldococcaceae</taxon>
        <taxon>Methanocaldococcus</taxon>
    </lineage>
</organism>
<keyword id="KW-1185">Reference proteome</keyword>